<keyword id="KW-0030">Aminoacyl-tRNA synthetase</keyword>
<keyword id="KW-0067">ATP-binding</keyword>
<keyword id="KW-0436">Ligase</keyword>
<keyword id="KW-0547">Nucleotide-binding</keyword>
<keyword id="KW-0648">Protein biosynthesis</keyword>
<organism>
    <name type="scientific">Tetrahymena thermophila</name>
    <dbReference type="NCBI Taxonomy" id="5911"/>
    <lineage>
        <taxon>Eukaryota</taxon>
        <taxon>Sar</taxon>
        <taxon>Alveolata</taxon>
        <taxon>Ciliophora</taxon>
        <taxon>Intramacronucleata</taxon>
        <taxon>Oligohymenophorea</taxon>
        <taxon>Hymenostomatida</taxon>
        <taxon>Tetrahymenina</taxon>
        <taxon>Tetrahymenidae</taxon>
        <taxon>Tetrahymena</taxon>
    </lineage>
</organism>
<proteinExistence type="inferred from homology"/>
<dbReference type="EC" id="6.1.1.5"/>
<dbReference type="EMBL" id="M30942">
    <property type="protein sequence ID" value="AAA30122.1"/>
    <property type="molecule type" value="Genomic_DNA"/>
</dbReference>
<dbReference type="PIR" id="A42399">
    <property type="entry name" value="A42399"/>
</dbReference>
<dbReference type="SMR" id="P36422"/>
<dbReference type="GO" id="GO:0002161">
    <property type="term" value="F:aminoacyl-tRNA deacylase activity"/>
    <property type="evidence" value="ECO:0007669"/>
    <property type="project" value="InterPro"/>
</dbReference>
<dbReference type="GO" id="GO:0005524">
    <property type="term" value="F:ATP binding"/>
    <property type="evidence" value="ECO:0007669"/>
    <property type="project" value="UniProtKB-KW"/>
</dbReference>
<dbReference type="GO" id="GO:0004822">
    <property type="term" value="F:isoleucine-tRNA ligase activity"/>
    <property type="evidence" value="ECO:0007669"/>
    <property type="project" value="UniProtKB-EC"/>
</dbReference>
<dbReference type="GO" id="GO:0000049">
    <property type="term" value="F:tRNA binding"/>
    <property type="evidence" value="ECO:0007669"/>
    <property type="project" value="InterPro"/>
</dbReference>
<dbReference type="GO" id="GO:0006428">
    <property type="term" value="P:isoleucyl-tRNA aminoacylation"/>
    <property type="evidence" value="ECO:0007669"/>
    <property type="project" value="InterPro"/>
</dbReference>
<dbReference type="CDD" id="cd07961">
    <property type="entry name" value="Anticodon_Ia_Ile_ABEc"/>
    <property type="match status" value="1"/>
</dbReference>
<dbReference type="CDD" id="cd00818">
    <property type="entry name" value="IleRS_core"/>
    <property type="match status" value="1"/>
</dbReference>
<dbReference type="FunFam" id="3.90.740.10:FF:000044">
    <property type="entry name" value="Isoleucine--tRNA ligase"/>
    <property type="match status" value="1"/>
</dbReference>
<dbReference type="FunFam" id="1.10.730.10:FF:000004">
    <property type="entry name" value="Isoleucyl-tRNA synthetase, cytoplasmic"/>
    <property type="match status" value="1"/>
</dbReference>
<dbReference type="FunFam" id="3.40.50.620:FF:000133">
    <property type="entry name" value="Isoleucyl-tRNA synthetase, cytoplasmic"/>
    <property type="match status" value="1"/>
</dbReference>
<dbReference type="FunFam" id="3.40.50.620:FF:000023">
    <property type="entry name" value="Isoleucyl-tRNA synthetase,cytoplasmic"/>
    <property type="match status" value="1"/>
</dbReference>
<dbReference type="Gene3D" id="3.40.50.620">
    <property type="entry name" value="HUPs"/>
    <property type="match status" value="2"/>
</dbReference>
<dbReference type="Gene3D" id="1.10.730.10">
    <property type="entry name" value="Isoleucyl-tRNA Synthetase, Domain 1"/>
    <property type="match status" value="1"/>
</dbReference>
<dbReference type="HAMAP" id="MF_02003">
    <property type="entry name" value="Ile_tRNA_synth_type2"/>
    <property type="match status" value="1"/>
</dbReference>
<dbReference type="InterPro" id="IPR001412">
    <property type="entry name" value="aa-tRNA-synth_I_CS"/>
</dbReference>
<dbReference type="InterPro" id="IPR002300">
    <property type="entry name" value="aa-tRNA-synth_Ia"/>
</dbReference>
<dbReference type="InterPro" id="IPR033709">
    <property type="entry name" value="Anticodon_Ile_ABEc"/>
</dbReference>
<dbReference type="InterPro" id="IPR002301">
    <property type="entry name" value="Ile-tRNA-ligase"/>
</dbReference>
<dbReference type="InterPro" id="IPR023586">
    <property type="entry name" value="Ile-tRNA-ligase_type2"/>
</dbReference>
<dbReference type="InterPro" id="IPR013155">
    <property type="entry name" value="M/V/L/I-tRNA-synth_anticd-bd"/>
</dbReference>
<dbReference type="InterPro" id="IPR014729">
    <property type="entry name" value="Rossmann-like_a/b/a_fold"/>
</dbReference>
<dbReference type="InterPro" id="IPR009080">
    <property type="entry name" value="tRNAsynth_Ia_anticodon-bd"/>
</dbReference>
<dbReference type="InterPro" id="IPR009008">
    <property type="entry name" value="Val/Leu/Ile-tRNA-synth_edit"/>
</dbReference>
<dbReference type="NCBIfam" id="TIGR00392">
    <property type="entry name" value="ileS"/>
    <property type="match status" value="1"/>
</dbReference>
<dbReference type="PANTHER" id="PTHR42780:SF1">
    <property type="entry name" value="ISOLEUCINE--TRNA LIGASE, CYTOPLASMIC"/>
    <property type="match status" value="1"/>
</dbReference>
<dbReference type="PANTHER" id="PTHR42780">
    <property type="entry name" value="SOLEUCYL-TRNA SYNTHETASE"/>
    <property type="match status" value="1"/>
</dbReference>
<dbReference type="Pfam" id="PF08264">
    <property type="entry name" value="Anticodon_1"/>
    <property type="match status" value="1"/>
</dbReference>
<dbReference type="Pfam" id="PF19302">
    <property type="entry name" value="DUF5915"/>
    <property type="match status" value="1"/>
</dbReference>
<dbReference type="Pfam" id="PF00133">
    <property type="entry name" value="tRNA-synt_1"/>
    <property type="match status" value="1"/>
</dbReference>
<dbReference type="PRINTS" id="PR00984">
    <property type="entry name" value="TRNASYNTHILE"/>
</dbReference>
<dbReference type="SUPFAM" id="SSF47323">
    <property type="entry name" value="Anticodon-binding domain of a subclass of class I aminoacyl-tRNA synthetases"/>
    <property type="match status" value="1"/>
</dbReference>
<dbReference type="SUPFAM" id="SSF52374">
    <property type="entry name" value="Nucleotidylyl transferase"/>
    <property type="match status" value="1"/>
</dbReference>
<dbReference type="SUPFAM" id="SSF50677">
    <property type="entry name" value="ValRS/IleRS/LeuRS editing domain"/>
    <property type="match status" value="1"/>
</dbReference>
<dbReference type="PROSITE" id="PS00178">
    <property type="entry name" value="AA_TRNA_LIGASE_I"/>
    <property type="match status" value="1"/>
</dbReference>
<reference key="1">
    <citation type="journal article" date="1992" name="J. Biol. Chem.">
        <title>Isoleucyl-tRNA synthetase from the ciliated protozoan Tetrahymena thermophila. DNA sequence, gene regulation, and leucine zipper motifs.</title>
        <authorList>
            <person name="Csank C."/>
            <person name="Martindale D.W."/>
        </authorList>
    </citation>
    <scope>NUCLEOTIDE SEQUENCE [GENOMIC DNA]</scope>
</reference>
<gene>
    <name type="primary">ILSA</name>
    <name type="synonym">CUPC</name>
</gene>
<feature type="chain" id="PRO_0000098602" description="Isoleucine--tRNA ligase">
    <location>
        <begin position="1"/>
        <end position="1081"/>
    </location>
</feature>
<feature type="short sequence motif" description="'HIGH' region">
    <location>
        <begin position="53"/>
        <end position="63"/>
    </location>
</feature>
<feature type="short sequence motif" description="'KMSKS' region">
    <location>
        <begin position="607"/>
        <end position="611"/>
    </location>
</feature>
<feature type="binding site" evidence="1">
    <location>
        <position position="610"/>
    </location>
    <ligand>
        <name>ATP</name>
        <dbReference type="ChEBI" id="CHEBI:30616"/>
    </ligand>
</feature>
<protein>
    <recommendedName>
        <fullName>Isoleucine--tRNA ligase</fullName>
        <ecNumber>6.1.1.5</ecNumber>
    </recommendedName>
    <alternativeName>
        <fullName>Isoleucyl-tRNA synthetase</fullName>
        <shortName>IleRS</shortName>
    </alternativeName>
</protein>
<name>SYI_TETTH</name>
<evidence type="ECO:0000250" key="1"/>
<evidence type="ECO:0000305" key="2"/>
<comment type="catalytic activity">
    <reaction>
        <text>tRNA(Ile) + L-isoleucine + ATP = L-isoleucyl-tRNA(Ile) + AMP + diphosphate</text>
        <dbReference type="Rhea" id="RHEA:11060"/>
        <dbReference type="Rhea" id="RHEA-COMP:9666"/>
        <dbReference type="Rhea" id="RHEA-COMP:9695"/>
        <dbReference type="ChEBI" id="CHEBI:30616"/>
        <dbReference type="ChEBI" id="CHEBI:33019"/>
        <dbReference type="ChEBI" id="CHEBI:58045"/>
        <dbReference type="ChEBI" id="CHEBI:78442"/>
        <dbReference type="ChEBI" id="CHEBI:78528"/>
        <dbReference type="ChEBI" id="CHEBI:456215"/>
        <dbReference type="EC" id="6.1.1.5"/>
    </reaction>
</comment>
<comment type="similarity">
    <text evidence="2">Belongs to the class-I aminoacyl-tRNA synthetase family.</text>
</comment>
<sequence>MASKTTFKDLQEIPDFPKEEENILKFWDEINAFKQQLEKTKDCPPFTFYDGPPFATGLPHYGNLLAGTIKDVVCRYASQNGKYVERRFGWDCHGLPVEYEIDKKLGITNRQEVLKMGVDKYNAECRSIVMRYAQEWRSIVNRFGRWVDFDNDYKTLDLKFMESVWWVFKQMFDKGLVYRGCKVMPYSNGCATVLSNFETQQNYKEVDDPSLFIAFKTAEDPKTKFIAWTTTPWTLPSNLALVINKDFDYVKVLDAKTQEHYILAECRLPELYKKDKDGYKILEKFKGSELVGREYEPLFPYFLSRKQDGCFRILAGDFVTADAGTGIVHCAPGFGDDDYKVSVANNIIKPDDPPVPVDENGHFTNVVSDFAGVYIKEADKLIRKNLKERGLLLVDSSFKHNYPFCWRSDTPLIYKAVHCWFIKVTALKDDLLANNKKAYWVPKFAQEGRFNNWLQNVSDWCFSRSRFWGNPIPIWVSEDFEEVVCIGSVEELKKLTGATEITDLHKDFIDHLTIPSQKGKGVLRRIDEVFDCWFESGSMPYGQQHYPFSMNEEEFSKRFPADFIGEGIDQTRGWFYTLNVISTALRNSNPYKNLIVNGIVLAADGKKMSKSKKNYDDPLLIASKYSVDAIRLYMINSPLVRAEEMSFKSEGVFAVKKDIFLPWYNAYKFLIQSITRWELATGKDYMFNEQLSVDTTKLTNPTDRWIIISCQNLINYVRIEMEKYHLYNVVPRLIHFLENLTNWYIRLNRNRLKGDYGLEEQETSLNVLFNVILNSTILMSPLVPFITESFYQNLRKVIPKGSSYLEESIHFLRIPTPKQELLDEKIERNFERMQNIINFARTLREKRKVSLKQPIMSLTVINQDQEFHDSLKDYIQYIEDEINTPSILHEINTANYVDLKAIPNHKLLGQKLGKEYNKDLKAAAGNLSAKDIETLKTTGSIDLVGKKLLLEDFTITQNYKKEYSSGDLELGGEGEVILLLNLAQDEKLKSKGLVREFTSNVQKTKKKTGLKVDDNIVIYYDVTKAPKLNAAIQSDLEAVQKVLKKPLVPLSEKNAALKIVENSLLTFQVDEESVTIEIAYA</sequence>
<accession>P36422</accession>